<dbReference type="EMBL" id="CP001399">
    <property type="protein sequence ID" value="ACP35488.1"/>
    <property type="molecule type" value="Genomic_DNA"/>
</dbReference>
<dbReference type="RefSeq" id="WP_012711384.1">
    <property type="nucleotide sequence ID" value="NC_012589.1"/>
</dbReference>
<dbReference type="SMR" id="C3MQ25"/>
<dbReference type="KEGG" id="sis:LS215_1481"/>
<dbReference type="HOGENOM" id="CLU_208825_0_0_2"/>
<dbReference type="OrthoDB" id="5619at2157"/>
<dbReference type="Proteomes" id="UP000001747">
    <property type="component" value="Chromosome"/>
</dbReference>
<dbReference type="GO" id="GO:1990904">
    <property type="term" value="C:ribonucleoprotein complex"/>
    <property type="evidence" value="ECO:0007669"/>
    <property type="project" value="UniProtKB-KW"/>
</dbReference>
<dbReference type="GO" id="GO:0005840">
    <property type="term" value="C:ribosome"/>
    <property type="evidence" value="ECO:0007669"/>
    <property type="project" value="UniProtKB-KW"/>
</dbReference>
<dbReference type="GO" id="GO:0019843">
    <property type="term" value="F:rRNA binding"/>
    <property type="evidence" value="ECO:0007669"/>
    <property type="project" value="UniProtKB-KW"/>
</dbReference>
<dbReference type="GO" id="GO:0003735">
    <property type="term" value="F:structural constituent of ribosome"/>
    <property type="evidence" value="ECO:0007669"/>
    <property type="project" value="InterPro"/>
</dbReference>
<dbReference type="GO" id="GO:0008270">
    <property type="term" value="F:zinc ion binding"/>
    <property type="evidence" value="ECO:0007669"/>
    <property type="project" value="UniProtKB-UniRule"/>
</dbReference>
<dbReference type="GO" id="GO:0006412">
    <property type="term" value="P:translation"/>
    <property type="evidence" value="ECO:0007669"/>
    <property type="project" value="UniProtKB-UniRule"/>
</dbReference>
<dbReference type="FunFam" id="2.20.25.30:FF:000003">
    <property type="entry name" value="50S ribosomal protein L37e"/>
    <property type="match status" value="1"/>
</dbReference>
<dbReference type="Gene3D" id="2.20.25.30">
    <property type="match status" value="1"/>
</dbReference>
<dbReference type="HAMAP" id="MF_00547">
    <property type="entry name" value="Ribosomal_eL37"/>
    <property type="match status" value="1"/>
</dbReference>
<dbReference type="InterPro" id="IPR001569">
    <property type="entry name" value="Ribosomal_eL37"/>
</dbReference>
<dbReference type="InterPro" id="IPR011331">
    <property type="entry name" value="Ribosomal_eL37/eL43"/>
</dbReference>
<dbReference type="InterPro" id="IPR018267">
    <property type="entry name" value="Ribosomal_eL37_CS"/>
</dbReference>
<dbReference type="InterPro" id="IPR011332">
    <property type="entry name" value="Ribosomal_zn-bd"/>
</dbReference>
<dbReference type="NCBIfam" id="NF003214">
    <property type="entry name" value="PRK04179.1"/>
    <property type="match status" value="1"/>
</dbReference>
<dbReference type="Pfam" id="PF01907">
    <property type="entry name" value="Ribosomal_L37e"/>
    <property type="match status" value="1"/>
</dbReference>
<dbReference type="SUPFAM" id="SSF57829">
    <property type="entry name" value="Zn-binding ribosomal proteins"/>
    <property type="match status" value="1"/>
</dbReference>
<dbReference type="PROSITE" id="PS01077">
    <property type="entry name" value="RIBOSOMAL_L37E"/>
    <property type="match status" value="1"/>
</dbReference>
<accession>C3MQ25</accession>
<organism>
    <name type="scientific">Saccharolobus islandicus (strain L.S.2.15 / Lassen #1)</name>
    <name type="common">Sulfolobus islandicus</name>
    <dbReference type="NCBI Taxonomy" id="429572"/>
    <lineage>
        <taxon>Archaea</taxon>
        <taxon>Thermoproteota</taxon>
        <taxon>Thermoprotei</taxon>
        <taxon>Sulfolobales</taxon>
        <taxon>Sulfolobaceae</taxon>
        <taxon>Saccharolobus</taxon>
    </lineage>
</organism>
<comment type="function">
    <text evidence="1">Binds to the 23S rRNA.</text>
</comment>
<comment type="cofactor">
    <cofactor evidence="1">
        <name>Zn(2+)</name>
        <dbReference type="ChEBI" id="CHEBI:29105"/>
    </cofactor>
    <text evidence="1">Binds 1 zinc ion per subunit.</text>
</comment>
<comment type="similarity">
    <text evidence="1">Belongs to the eukaryotic ribosomal protein eL37 family.</text>
</comment>
<reference key="1">
    <citation type="journal article" date="2009" name="Proc. Natl. Acad. Sci. U.S.A.">
        <title>Biogeography of the Sulfolobus islandicus pan-genome.</title>
        <authorList>
            <person name="Reno M.L."/>
            <person name="Held N.L."/>
            <person name="Fields C.J."/>
            <person name="Burke P.V."/>
            <person name="Whitaker R.J."/>
        </authorList>
    </citation>
    <scope>NUCLEOTIDE SEQUENCE [LARGE SCALE GENOMIC DNA]</scope>
    <source>
        <strain>L.S.2.15 / Lassen #1</strain>
    </source>
</reference>
<protein>
    <recommendedName>
        <fullName evidence="1">Large ribosomal subunit protein eL37</fullName>
    </recommendedName>
    <alternativeName>
        <fullName evidence="2">50S ribosomal protein L37e</fullName>
    </alternativeName>
</protein>
<sequence>MKGTPSFGKMNKSHTHIRCRRCGRNAYNVSKHYCAACGFGKTKKIRRYSWQNKKVNGVRIR</sequence>
<name>RL37_SACI2</name>
<evidence type="ECO:0000255" key="1">
    <source>
        <dbReference type="HAMAP-Rule" id="MF_00547"/>
    </source>
</evidence>
<evidence type="ECO:0000305" key="2"/>
<feature type="chain" id="PRO_1000211971" description="Large ribosomal subunit protein eL37">
    <location>
        <begin position="1"/>
        <end position="61"/>
    </location>
</feature>
<feature type="zinc finger region" description="C4-type" evidence="1">
    <location>
        <begin position="19"/>
        <end position="37"/>
    </location>
</feature>
<feature type="binding site" evidence="1">
    <location>
        <position position="19"/>
    </location>
    <ligand>
        <name>Zn(2+)</name>
        <dbReference type="ChEBI" id="CHEBI:29105"/>
    </ligand>
</feature>
<feature type="binding site" evidence="1">
    <location>
        <position position="22"/>
    </location>
    <ligand>
        <name>Zn(2+)</name>
        <dbReference type="ChEBI" id="CHEBI:29105"/>
    </ligand>
</feature>
<feature type="binding site" evidence="1">
    <location>
        <position position="34"/>
    </location>
    <ligand>
        <name>Zn(2+)</name>
        <dbReference type="ChEBI" id="CHEBI:29105"/>
    </ligand>
</feature>
<feature type="binding site" evidence="1">
    <location>
        <position position="37"/>
    </location>
    <ligand>
        <name>Zn(2+)</name>
        <dbReference type="ChEBI" id="CHEBI:29105"/>
    </ligand>
</feature>
<proteinExistence type="inferred from homology"/>
<keyword id="KW-0479">Metal-binding</keyword>
<keyword id="KW-0687">Ribonucleoprotein</keyword>
<keyword id="KW-0689">Ribosomal protein</keyword>
<keyword id="KW-0694">RNA-binding</keyword>
<keyword id="KW-0699">rRNA-binding</keyword>
<keyword id="KW-0862">Zinc</keyword>
<keyword id="KW-0863">Zinc-finger</keyword>
<gene>
    <name evidence="1" type="primary">rpl37e</name>
    <name type="ordered locus">LS215_1481</name>
</gene>